<organism>
    <name type="scientific">Mus musculus</name>
    <name type="common">Mouse</name>
    <dbReference type="NCBI Taxonomy" id="10090"/>
    <lineage>
        <taxon>Eukaryota</taxon>
        <taxon>Metazoa</taxon>
        <taxon>Chordata</taxon>
        <taxon>Craniata</taxon>
        <taxon>Vertebrata</taxon>
        <taxon>Euteleostomi</taxon>
        <taxon>Mammalia</taxon>
        <taxon>Eutheria</taxon>
        <taxon>Euarchontoglires</taxon>
        <taxon>Glires</taxon>
        <taxon>Rodentia</taxon>
        <taxon>Myomorpha</taxon>
        <taxon>Muroidea</taxon>
        <taxon>Muridae</taxon>
        <taxon>Murinae</taxon>
        <taxon>Mus</taxon>
        <taxon>Mus</taxon>
    </lineage>
</organism>
<sequence>MGIPVGKSMLVLLISLAFALCCIAAYGPGETLCGGELVDTLQFVCSDRGFYFSRPSSRANRRSRGIVEECCFRSCDLALLETYCATPAKSERDVSTSQAVLPDDFPRYPVGKFFQYDTWRQSAGRLRRGLPALLRARRGRMLAKELKEFREAKRHRPLIVLPPKDPAHGGASSEMSSNHQ</sequence>
<comment type="function">
    <text evidence="2 4 5 9 11 12 16 17">The insulin-like growth factors possess growth-promoting activity (PubMed:29440408). Major fetal growth hormone in mammals. Plays a key role in regulating fetoplacental development (Probable) (PubMed:12087403, PubMed:2330056). IGF2 is influenced by placental lactogen (Probable). Also involved in tissue differentiation (Probable). In adults, involved in glucose metabolism in adipose tissue, skeletal muscle and liver (Probable). Acts as a ligand for integrin which is required for IGF2 signaling (By similarity). Positively regulates myogenic transcription factor MYOD1 function by facilitating the recruitment of transcriptional coactivators, thereby controlling muscle terminal differentiation (PubMed:16901893). Inhibits myoblast differentiation and modulates metabolism via increasing the mitochondrial respiration rate (PubMed:32557799).</text>
</comment>
<comment type="function">
    <text evidence="6">Preptin undergoes glucose-mediated co-secretion with insulin, and acts as a physiological amplifier of glucose-mediated insulin secretion. Exhibits osteogenic properties by increasing osteoblast mitogenic activity through phosphoactivation of MAPK1 and MAPK3.</text>
</comment>
<comment type="subunit">
    <text evidence="2 7">Interacts with MYORG; this interaction is required for IGF2 secretion (PubMed:19706595). Interacts with integrins ITGAV:ITGB3 and ITGA6:ITGB4; integrin-binding is required for IGF2 signaling (By similarity). Interacts with IGFBP2 (By similarity).</text>
</comment>
<comment type="subcellular location">
    <subcellularLocation>
        <location evidence="10">Secreted</location>
    </subcellularLocation>
</comment>
<comment type="alternative products">
    <event type="alternative promoter"/>
    <isoform>
        <id>P09535-1</id>
        <name>1</name>
        <sequence type="displayed"/>
    </isoform>
    <isoform>
        <id>P09535-2</id>
        <name>2</name>
        <sequence type="described" ref="VSP_059113"/>
    </isoform>
</comment>
<comment type="tissue specificity">
    <text evidence="11">Expressed in the heart, blood serum, kidney and skeletal muscle including the tibialis anterior muscle.</text>
</comment>
<comment type="developmental stage">
    <text evidence="8 10 11">At 8 dpc, 9.5 dpc and 16.5 dpc, transcripts from parental allele are detected in embryonic and extraembryonic tissues (PubMed:1997210, PubMed:28522536). At 16.5 dpc, transcripts from parental and maternal alleles are detected only in the choroid plexus and the leptomeninges (PubMed:1997210). Expressed in fetal muscle and brain tissue at 12.5 dpc (PubMed:29440408). Low levels of expression during myoblast proliferation. Levels rise rapidly during myoblast differentiation and then decrease.</text>
</comment>
<comment type="developmental stage">
    <molecule>Isoform 2</molecule>
    <text evidence="11">Predominant isoform expressed in fetal muscle tissues at 12.5 dpc.</text>
</comment>
<comment type="PTM">
    <text evidence="2">Proteolytically processed by PCSK4, proIGF2 is cleaved at Arg-128 and Arg-92 to generate big-IGF2 and mature IGF2.</text>
</comment>
<comment type="disruption phenotype">
    <text evidence="4 8 9">Heterozygous animals are smaller than their wild type littermates but appear normal, reach sexual maturity and are fertile (PubMed:2330056). Transmission of this mutation through the male germline results in heterozygous progeny that are growth deficient. In contrast, when the disrupted gene is transmitted maternally, the heterozygous offspring are phenotypically normal. Homozygous mutants are indistinguishable in appearance from growth-deficient heterozygous siblings (PubMed:1997210). Mutant animals for transcript P0 specifically show a reduced growth of the placenta followed by fetal growth restriction, passive permeability for nutrients of the placenta is decreased (PubMed:12087403).</text>
</comment>
<comment type="miscellaneous">
    <text evidence="8 17">The IGF2 locus is imprinted. Paternal inherited gene is expressed, while the maternal inherited gene is imprinted, hence silenced (PubMed:1997210). It is differentially regulated in the placenta and fetus, transcribed from 3 promoters P1, P2 and P3 in both fetus and placenta and additionally from a fourth placental-specific promoter, P0 (Probable).</text>
</comment>
<comment type="miscellaneous">
    <molecule>Isoform 1</molecule>
    <text evidence="17">Product of 4 different transcripts regulated by 4 different promoters, denominated P0, P1, P2 and P3.</text>
</comment>
<comment type="similarity">
    <text evidence="15">Belongs to the insulin family.</text>
</comment>
<accession>P09535</accession>
<accession>E9QLW5</accession>
<reference key="1">
    <citation type="journal article" date="1986" name="DNA">
        <title>Sequence of a placental cDNA encoding the mouse insulin-like growth factor II precursor.</title>
        <authorList>
            <person name="Stempien M.M."/>
            <person name="Fong N.M."/>
            <person name="Rall L.B."/>
            <person name="Bell G.I."/>
        </authorList>
    </citation>
    <scope>NUCLEOTIDE SEQUENCE [MRNA]</scope>
</reference>
<reference key="2">
    <citation type="journal article" date="1990" name="DNA Cell Biol.">
        <title>Evolution of insulin-like growth factor II: characterization of the mouse IGF-II gene and identification of two pseudo-exons.</title>
        <authorList>
            <person name="Rotwein P."/>
            <person name="Hall L.J."/>
        </authorList>
    </citation>
    <scope>NUCLEOTIDE SEQUENCE [GENOMIC DNA]</scope>
</reference>
<reference key="3">
    <citation type="journal article" date="1996" name="DNA Res.">
        <title>Nucleotide sequence of a 28-kb mouse genomic region comprising the imprinted Igf2 gene.</title>
        <authorList>
            <person name="Sasaki H."/>
            <person name="Shimozaki K."/>
            <person name="Zubair M."/>
            <person name="Aoki N."/>
            <person name="Hatano N."/>
            <person name="Moore T."/>
            <person name="Feil R."/>
            <person name="Constancia M."/>
            <person name="Reik W."/>
            <person name="Rotwein P."/>
        </authorList>
    </citation>
    <scope>NUCLEOTIDE SEQUENCE [GENOMIC DNA]</scope>
</reference>
<reference key="4">
    <citation type="journal article" date="2009" name="PLoS Biol.">
        <title>Lineage-specific biology revealed by a finished genome assembly of the mouse.</title>
        <authorList>
            <person name="Church D.M."/>
            <person name="Goodstadt L."/>
            <person name="Hillier L.W."/>
            <person name="Zody M.C."/>
            <person name="Goldstein S."/>
            <person name="She X."/>
            <person name="Bult C.J."/>
            <person name="Agarwala R."/>
            <person name="Cherry J.L."/>
            <person name="DiCuccio M."/>
            <person name="Hlavina W."/>
            <person name="Kapustin Y."/>
            <person name="Meric P."/>
            <person name="Maglott D."/>
            <person name="Birtle Z."/>
            <person name="Marques A.C."/>
            <person name="Graves T."/>
            <person name="Zhou S."/>
            <person name="Teague B."/>
            <person name="Potamousis K."/>
            <person name="Churas C."/>
            <person name="Place M."/>
            <person name="Herschleb J."/>
            <person name="Runnheim R."/>
            <person name="Forrest D."/>
            <person name="Amos-Landgraf J."/>
            <person name="Schwartz D.C."/>
            <person name="Cheng Z."/>
            <person name="Lindblad-Toh K."/>
            <person name="Eichler E.E."/>
            <person name="Ponting C.P."/>
        </authorList>
    </citation>
    <scope>NUCLEOTIDE SEQUENCE [LARGE SCALE GENOMIC DNA] (ISOFORM 2)</scope>
    <source>
        <strain>C57BL/6J</strain>
    </source>
</reference>
<reference key="5">
    <citation type="journal article" date="2004" name="Genome Res.">
        <title>The status, quality, and expansion of the NIH full-length cDNA project: the Mammalian Gene Collection (MGC).</title>
        <authorList>
            <consortium name="The MGC Project Team"/>
        </authorList>
    </citation>
    <scope>NUCLEOTIDE SEQUENCE [LARGE SCALE MRNA]</scope>
    <source>
        <strain>C57BL/6J</strain>
        <tissue>Embryo</tissue>
    </source>
</reference>
<reference key="6">
    <citation type="journal article" date="1989" name="Proc. Natl. Acad. Sci. U.S.A.">
        <title>Coordinate expression of insulin-like growth factor II and its receptor during muscle differentiation.</title>
        <authorList>
            <person name="Tollefsen S.E."/>
            <person name="Sadow J.L."/>
            <person name="Rotwein P."/>
        </authorList>
    </citation>
    <scope>NUCLEOTIDE SEQUENCE [GENOMIC DNA] OF 1-52</scope>
</reference>
<reference key="7">
    <citation type="journal article" date="1993" name="Regul. Pept.">
        <title>Differential expression of the human, mouse and rat IGF-II genes.</title>
        <authorList>
            <person name="Holthuizen P.E."/>
            <person name="Cleutjens C.B."/>
            <person name="Veenstra G.J."/>
            <person name="van der Lee F.M."/>
            <person name="Koonen-Reemst A.M."/>
            <person name="Sussenbach J.S."/>
        </authorList>
    </citation>
    <scope>NUCLEOTIDE SEQUENCE [GENOMIC DNA] OF 1-52 AND 103-180</scope>
    <source>
        <strain>BALB/cJ</strain>
        <tissue>Spleen</tissue>
    </source>
</reference>
<reference key="8">
    <citation type="journal article" date="2001" name="Biochem. J.">
        <title>Preptin derived from proinsulin-like growth factor II (proIGF-II) is secreted from pancreatic islet beta-cells and enhances insulin secretion.</title>
        <authorList>
            <person name="Buchanan C.M."/>
            <person name="Phillips A.R."/>
            <person name="Cooper G.J."/>
        </authorList>
    </citation>
    <scope>PROTEIN SEQUENCE OF 93-126</scope>
    <scope>INSULIN-ENHANCING FUNCTION OF PREPTIN</scope>
</reference>
<reference key="9">
    <citation type="journal article" date="1990" name="Nature">
        <title>A growth-deficiency phenotype in heterozygous mice carrying an insulin-like growth factor II gene disrupted by targeting.</title>
        <authorList>
            <person name="DeChiara T.M."/>
            <person name="Efstratiadis A."/>
            <person name="Robertson E.J."/>
        </authorList>
    </citation>
    <scope>FUNCTION</scope>
    <scope>DISRUPTION PHENOTYPE</scope>
</reference>
<reference key="10">
    <citation type="journal article" date="1991" name="Cell">
        <title>Parental imprinting of the mouse insulin-like growth factor II gene.</title>
        <authorList>
            <person name="DeChiara T.M."/>
            <person name="Robertson E.J."/>
            <person name="Efstratiadis A."/>
        </authorList>
    </citation>
    <scope>FUNCTION</scope>
    <scope>DISRUPTION PHENOTYPE</scope>
    <scope>DEVELOPMENTAL STAGE</scope>
    <scope>MISCELLANEOUS</scope>
</reference>
<reference key="11">
    <citation type="journal article" date="2002" name="Nature">
        <title>Placental-specific IGF-II is a major modulator of placental and fetal growth.</title>
        <authorList>
            <person name="Constancia M."/>
            <person name="Hemberger M."/>
            <person name="Hughes J."/>
            <person name="Dean W."/>
            <person name="Ferguson-Smith A."/>
            <person name="Fundele R."/>
            <person name="Stewart F."/>
            <person name="Kelsey G."/>
            <person name="Fowden A."/>
            <person name="Sibley C."/>
            <person name="Reik W."/>
        </authorList>
    </citation>
    <scope>FUNCTION</scope>
    <scope>DISRUPTION PHENOTYPE</scope>
</reference>
<reference key="12">
    <citation type="journal article" date="2006" name="J. Biol. Chem.">
        <title>Control of MyoD function during initiation of muscle differentiation by an autocrine signaling pathway activated by insulin-like growth factor-II.</title>
        <authorList>
            <person name="Wilson E.M."/>
            <person name="Rotwein P."/>
        </authorList>
    </citation>
    <scope>FUNCTION</scope>
</reference>
<reference key="13">
    <citation type="journal article" date="2007" name="Am. J. Physiol.">
        <title>Preptin, another peptide product of the pancreatic beta-cell, is osteogenic in vitro and in vivo.</title>
        <authorList>
            <person name="Cornish J."/>
            <person name="Callon K.E."/>
            <person name="Bava U."/>
            <person name="Watson M."/>
            <person name="Xu X."/>
            <person name="Lin J.M."/>
            <person name="Chan V.A."/>
            <person name="Grey A.B."/>
            <person name="Naot D."/>
            <person name="Buchanan C.M."/>
            <person name="Cooper G.J."/>
            <person name="Reid I.R."/>
        </authorList>
    </citation>
    <scope>OSTEOGENIC FUNCTION OF PREPTIN</scope>
</reference>
<reference key="14">
    <citation type="journal article" date="2009" name="J. Biol. Chem.">
        <title>NET37, a nuclear envelope transmembrane protein with glycosidase homology, is involved in myoblast differentiation.</title>
        <authorList>
            <person name="Datta K."/>
            <person name="Guan T."/>
            <person name="Gerace L."/>
        </authorList>
    </citation>
    <scope>INTERACTION WITH MYORG</scope>
</reference>
<reference key="15">
    <citation type="journal article" date="2014" name="Clin. Endocrinol. (Oxf.)">
        <title>Insulin-like growth factor-II: its role in metabolic and endocrine disease.</title>
        <authorList>
            <person name="Livingstone C."/>
            <person name="Borai A."/>
        </authorList>
    </citation>
    <scope>REVIEW OF FUNCTION</scope>
</reference>
<reference key="16">
    <citation type="journal article" date="2017" name="Science">
        <title>A placental growth factor is silenced in mouse embryos by the zinc finger protein ZFP568.</title>
        <authorList>
            <person name="Yang P."/>
            <person name="Wang Y."/>
            <person name="Hoang D."/>
            <person name="Tinkham M."/>
            <person name="Patel A."/>
            <person name="Sun M.A."/>
            <person name="Wolf G."/>
            <person name="Baker M."/>
            <person name="Chien H.C."/>
            <person name="Lai K.N."/>
            <person name="Cheng X."/>
            <person name="Shen C.J."/>
            <person name="Macfarlan T.S."/>
        </authorList>
    </citation>
    <scope>ALTERNATIVE SPLICING</scope>
    <scope>MISCELLANEOUS</scope>
    <scope>SUBCELLULAR LOCATION</scope>
    <scope>DEVELOPMENTAL STAGE</scope>
</reference>
<reference key="17">
    <citation type="journal article" date="2018" name="Proc. Natl. Acad. Sci. U.S.A.">
        <title>The ZBED6-IGF2 axis has a major effect on growth of skeletal muscle and internal organs in placental mammals.</title>
        <authorList>
            <person name="Younis S."/>
            <person name="Schoenke M."/>
            <person name="Massart J."/>
            <person name="Hjortebjerg R."/>
            <person name="Sundstroem E."/>
            <person name="Gustafson U."/>
            <person name="Bjoernholm M."/>
            <person name="Krook A."/>
            <person name="Frystyk J."/>
            <person name="Zierath J.R."/>
            <person name="Andersson L."/>
        </authorList>
    </citation>
    <scope>FUNCTION</scope>
    <scope>TISSUE SPECIFICITY</scope>
    <scope>DEVELOPMENTAL STAGE</scope>
</reference>
<reference key="18">
    <citation type="journal article" date="2020" name="FASEB J.">
        <title>The importance of the ZBED6-IGF2 axis for metabolic regulation in mouse myoblast cells.</title>
        <authorList>
            <person name="Younis S."/>
            <person name="Naboulsi R."/>
            <person name="Wang X."/>
            <person name="Cao X."/>
            <person name="Larsson M."/>
            <person name="Sargsyan E."/>
            <person name="Bergsten P."/>
            <person name="Welsh N."/>
            <person name="Andersson L."/>
        </authorList>
    </citation>
    <scope>FUNCTION</scope>
</reference>
<name>IGF2_MOUSE</name>
<proteinExistence type="evidence at protein level"/>
<keyword id="KW-0877">Alternative promoter usage</keyword>
<keyword id="KW-0119">Carbohydrate metabolism</keyword>
<keyword id="KW-0165">Cleavage on pair of basic residues</keyword>
<keyword id="KW-0903">Direct protein sequencing</keyword>
<keyword id="KW-1015">Disulfide bond</keyword>
<keyword id="KW-0313">Glucose metabolism</keyword>
<keyword id="KW-0339">Growth factor</keyword>
<keyword id="KW-0372">Hormone</keyword>
<keyword id="KW-0497">Mitogen</keyword>
<keyword id="KW-0892">Osteogenesis</keyword>
<keyword id="KW-1185">Reference proteome</keyword>
<keyword id="KW-0964">Secreted</keyword>
<keyword id="KW-0732">Signal</keyword>
<dbReference type="EMBL" id="M14951">
    <property type="protein sequence ID" value="AAA37683.1"/>
    <property type="molecule type" value="mRNA"/>
</dbReference>
<dbReference type="EMBL" id="M36332">
    <property type="protein sequence ID" value="AAA37926.1"/>
    <property type="molecule type" value="Genomic_DNA"/>
</dbReference>
<dbReference type="EMBL" id="M36331">
    <property type="protein sequence ID" value="AAA37926.1"/>
    <property type="status" value="JOINED"/>
    <property type="molecule type" value="Genomic_DNA"/>
</dbReference>
<dbReference type="EMBL" id="U71085">
    <property type="protein sequence ID" value="AAC53516.1"/>
    <property type="molecule type" value="Genomic_DNA"/>
</dbReference>
<dbReference type="EMBL" id="M24633">
    <property type="protein sequence ID" value="AAA37923.1"/>
    <property type="molecule type" value="Genomic_DNA"/>
</dbReference>
<dbReference type="EMBL" id="X71921">
    <property type="protein sequence ID" value="CAA50737.1"/>
    <property type="molecule type" value="Genomic_DNA"/>
</dbReference>
<dbReference type="EMBL" id="X71922">
    <property type="protein sequence ID" value="CAA50738.1"/>
    <property type="molecule type" value="Genomic_DNA"/>
</dbReference>
<dbReference type="EMBL" id="AC013548">
    <property type="status" value="NOT_ANNOTATED_CDS"/>
    <property type="molecule type" value="Genomic_DNA"/>
</dbReference>
<dbReference type="EMBL" id="BC053489">
    <property type="protein sequence ID" value="AAH53489.1"/>
    <property type="molecule type" value="mRNA"/>
</dbReference>
<dbReference type="CCDS" id="CCDS22033.2">
    <molecule id="P09535-2"/>
</dbReference>
<dbReference type="CCDS" id="CCDS52458.1">
    <molecule id="P09535-1"/>
</dbReference>
<dbReference type="PIR" id="A24913">
    <property type="entry name" value="A24913"/>
</dbReference>
<dbReference type="RefSeq" id="NP_001116208.1">
    <molecule id="P09535-1"/>
    <property type="nucleotide sequence ID" value="NM_001122736.2"/>
</dbReference>
<dbReference type="RefSeq" id="NP_001116209.1">
    <molecule id="P09535-1"/>
    <property type="nucleotide sequence ID" value="NM_001122737.2"/>
</dbReference>
<dbReference type="RefSeq" id="NP_001302417.1">
    <molecule id="P09535-1"/>
    <property type="nucleotide sequence ID" value="NM_001315488.1"/>
</dbReference>
<dbReference type="RefSeq" id="NP_001302418.1">
    <molecule id="P09535-1"/>
    <property type="nucleotide sequence ID" value="NM_001315489.1"/>
</dbReference>
<dbReference type="RefSeq" id="NP_034644.2">
    <molecule id="P09535-2"/>
    <property type="nucleotide sequence ID" value="NM_010514.3"/>
</dbReference>
<dbReference type="RefSeq" id="XP_006508550.1">
    <molecule id="P09535-1"/>
    <property type="nucleotide sequence ID" value="XM_006508487.1"/>
</dbReference>
<dbReference type="RefSeq" id="XP_036008590.1">
    <molecule id="P09535-1"/>
    <property type="nucleotide sequence ID" value="XM_036152697.1"/>
</dbReference>
<dbReference type="SMR" id="P09535"/>
<dbReference type="BioGRID" id="200549">
    <property type="interactions" value="3"/>
</dbReference>
<dbReference type="FunCoup" id="P09535">
    <property type="interactions" value="799"/>
</dbReference>
<dbReference type="STRING" id="10090.ENSMUSP00000114076"/>
<dbReference type="GlyGen" id="P09535">
    <property type="glycosylation" value="1 site"/>
</dbReference>
<dbReference type="iPTMnet" id="P09535"/>
<dbReference type="PhosphoSitePlus" id="P09535"/>
<dbReference type="CPTAC" id="non-CPTAC-3521"/>
<dbReference type="jPOST" id="P09535"/>
<dbReference type="PaxDb" id="10090-ENSMUSP00000101556"/>
<dbReference type="PeptideAtlas" id="P09535"/>
<dbReference type="ProteomicsDB" id="269532">
    <molecule id="P09535-1"/>
</dbReference>
<dbReference type="ProteomicsDB" id="269533">
    <molecule id="P09535-2"/>
</dbReference>
<dbReference type="Pumba" id="P09535"/>
<dbReference type="ABCD" id="P09535">
    <property type="antibodies" value="1 sequenced antibody"/>
</dbReference>
<dbReference type="Antibodypedia" id="1027">
    <property type="antibodies" value="635 antibodies from 40 providers"/>
</dbReference>
<dbReference type="DNASU" id="16002"/>
<dbReference type="Ensembl" id="ENSMUST00000000033.12">
    <molecule id="P09535-1"/>
    <property type="protein sequence ID" value="ENSMUSP00000000033.6"/>
    <property type="gene ID" value="ENSMUSG00000048583.18"/>
</dbReference>
<dbReference type="Ensembl" id="ENSMUST00000105935.8">
    <molecule id="P09535-1"/>
    <property type="protein sequence ID" value="ENSMUSP00000101555.2"/>
    <property type="gene ID" value="ENSMUSG00000048583.18"/>
</dbReference>
<dbReference type="Ensembl" id="ENSMUST00000105936.8">
    <molecule id="P09535-1"/>
    <property type="protein sequence ID" value="ENSMUSP00000101556.2"/>
    <property type="gene ID" value="ENSMUSG00000048583.18"/>
</dbReference>
<dbReference type="Ensembl" id="ENSMUST00000121128.8">
    <molecule id="P09535-2"/>
    <property type="protein sequence ID" value="ENSMUSP00000114076.2"/>
    <property type="gene ID" value="ENSMUSG00000048583.18"/>
</dbReference>
<dbReference type="GeneID" id="16002"/>
<dbReference type="KEGG" id="mmu:16002"/>
<dbReference type="UCSC" id="uc009kod.2">
    <molecule id="P09535-1"/>
    <property type="organism name" value="mouse"/>
</dbReference>
<dbReference type="AGR" id="MGI:96434"/>
<dbReference type="CTD" id="3481"/>
<dbReference type="MGI" id="MGI:96434">
    <property type="gene designation" value="Igf2"/>
</dbReference>
<dbReference type="VEuPathDB" id="HostDB:ENSMUSG00000048583"/>
<dbReference type="eggNOG" id="ENOG502S0I0">
    <property type="taxonomic scope" value="Eukaryota"/>
</dbReference>
<dbReference type="GeneTree" id="ENSGT00940000160745"/>
<dbReference type="HOGENOM" id="CLU_092464_1_0_1"/>
<dbReference type="InParanoid" id="P09535"/>
<dbReference type="OMA" id="KVQRMCA"/>
<dbReference type="OrthoDB" id="69148at9989"/>
<dbReference type="PhylomeDB" id="P09535"/>
<dbReference type="TreeFam" id="TF332820"/>
<dbReference type="Reactome" id="R-MMU-114608">
    <property type="pathway name" value="Platelet degranulation"/>
</dbReference>
<dbReference type="Reactome" id="R-MMU-2404192">
    <property type="pathway name" value="Signaling by Type 1 Insulin-like Growth Factor 1 Receptor (IGF1R)"/>
</dbReference>
<dbReference type="Reactome" id="R-MMU-2428928">
    <property type="pathway name" value="IRS-related events triggered by IGF1R"/>
</dbReference>
<dbReference type="Reactome" id="R-MMU-2428933">
    <property type="pathway name" value="SHC-related events triggered by IGF1R"/>
</dbReference>
<dbReference type="Reactome" id="R-MMU-381426">
    <property type="pathway name" value="Regulation of Insulin-like Growth Factor (IGF) transport and uptake by Insulin-like Growth Factor Binding Proteins (IGFBPs)"/>
</dbReference>
<dbReference type="BioGRID-ORCS" id="16002">
    <property type="hits" value="1 hit in 77 CRISPR screens"/>
</dbReference>
<dbReference type="ChiTaRS" id="Igf2">
    <property type="organism name" value="mouse"/>
</dbReference>
<dbReference type="PRO" id="PR:P09535"/>
<dbReference type="Proteomes" id="UP000000589">
    <property type="component" value="Chromosome 7"/>
</dbReference>
<dbReference type="RNAct" id="P09535">
    <property type="molecule type" value="protein"/>
</dbReference>
<dbReference type="Bgee" id="ENSMUSG00000048583">
    <property type="expression patterns" value="Expressed in extraembryonic membrane and 179 other cell types or tissues"/>
</dbReference>
<dbReference type="ExpressionAtlas" id="P09535">
    <property type="expression patterns" value="baseline and differential"/>
</dbReference>
<dbReference type="GO" id="GO:0062023">
    <property type="term" value="C:collagen-containing extracellular matrix"/>
    <property type="evidence" value="ECO:0007005"/>
    <property type="project" value="BHF-UCL"/>
</dbReference>
<dbReference type="GO" id="GO:0005615">
    <property type="term" value="C:extracellular space"/>
    <property type="evidence" value="ECO:0000314"/>
    <property type="project" value="MGI"/>
</dbReference>
<dbReference type="GO" id="GO:0008083">
    <property type="term" value="F:growth factor activity"/>
    <property type="evidence" value="ECO:0007669"/>
    <property type="project" value="UniProtKB-KW"/>
</dbReference>
<dbReference type="GO" id="GO:0005179">
    <property type="term" value="F:hormone activity"/>
    <property type="evidence" value="ECO:0007669"/>
    <property type="project" value="UniProtKB-KW"/>
</dbReference>
<dbReference type="GO" id="GO:0005158">
    <property type="term" value="F:insulin receptor binding"/>
    <property type="evidence" value="ECO:0007669"/>
    <property type="project" value="Ensembl"/>
</dbReference>
<dbReference type="GO" id="GO:0005159">
    <property type="term" value="F:insulin-like growth factor receptor binding"/>
    <property type="evidence" value="ECO:0000353"/>
    <property type="project" value="MGI"/>
</dbReference>
<dbReference type="GO" id="GO:0005178">
    <property type="term" value="F:integrin binding"/>
    <property type="evidence" value="ECO:0000250"/>
    <property type="project" value="UniProtKB"/>
</dbReference>
<dbReference type="GO" id="GO:0043539">
    <property type="term" value="F:protein serine/threonine kinase activator activity"/>
    <property type="evidence" value="ECO:0000315"/>
    <property type="project" value="BHF-UCL"/>
</dbReference>
<dbReference type="GO" id="GO:0048018">
    <property type="term" value="F:receptor ligand activity"/>
    <property type="evidence" value="ECO:0000314"/>
    <property type="project" value="MGI"/>
</dbReference>
<dbReference type="GO" id="GO:0030297">
    <property type="term" value="F:transmembrane receptor protein tyrosine kinase activator activity"/>
    <property type="evidence" value="ECO:0000314"/>
    <property type="project" value="MGI"/>
</dbReference>
<dbReference type="GO" id="GO:0009887">
    <property type="term" value="P:animal organ morphogenesis"/>
    <property type="evidence" value="ECO:0000315"/>
    <property type="project" value="MGI"/>
</dbReference>
<dbReference type="GO" id="GO:0001892">
    <property type="term" value="P:embryonic placenta development"/>
    <property type="evidence" value="ECO:0000315"/>
    <property type="project" value="UniProtKB"/>
</dbReference>
<dbReference type="GO" id="GO:0060669">
    <property type="term" value="P:embryonic placenta morphogenesis"/>
    <property type="evidence" value="ECO:0000315"/>
    <property type="project" value="UniProtKB"/>
</dbReference>
<dbReference type="GO" id="GO:0031017">
    <property type="term" value="P:exocrine pancreas development"/>
    <property type="evidence" value="ECO:0000315"/>
    <property type="project" value="MGI"/>
</dbReference>
<dbReference type="GO" id="GO:0006006">
    <property type="term" value="P:glucose metabolic process"/>
    <property type="evidence" value="ECO:0007669"/>
    <property type="project" value="UniProtKB-KW"/>
</dbReference>
<dbReference type="GO" id="GO:0001701">
    <property type="term" value="P:in utero embryonic development"/>
    <property type="evidence" value="ECO:0000315"/>
    <property type="project" value="UniProtKB"/>
</dbReference>
<dbReference type="GO" id="GO:0008286">
    <property type="term" value="P:insulin receptor signaling pathway"/>
    <property type="evidence" value="ECO:0000315"/>
    <property type="project" value="BHF-UCL"/>
</dbReference>
<dbReference type="GO" id="GO:0048009">
    <property type="term" value="P:insulin-like growth factor receptor signaling pathway"/>
    <property type="evidence" value="ECO:0000314"/>
    <property type="project" value="MGI"/>
</dbReference>
<dbReference type="GO" id="GO:0051148">
    <property type="term" value="P:negative regulation of muscle cell differentiation"/>
    <property type="evidence" value="ECO:0000315"/>
    <property type="project" value="UniProtKB"/>
</dbReference>
<dbReference type="GO" id="GO:0000122">
    <property type="term" value="P:negative regulation of transcription by RNA polymerase II"/>
    <property type="evidence" value="ECO:0000315"/>
    <property type="project" value="UniProtKB"/>
</dbReference>
<dbReference type="GO" id="GO:0001649">
    <property type="term" value="P:osteoblast differentiation"/>
    <property type="evidence" value="ECO:0000270"/>
    <property type="project" value="BHF-UCL"/>
</dbReference>
<dbReference type="GO" id="GO:0042104">
    <property type="term" value="P:positive regulation of activated T cell proliferation"/>
    <property type="evidence" value="ECO:0007669"/>
    <property type="project" value="Ensembl"/>
</dbReference>
<dbReference type="GO" id="GO:0051781">
    <property type="term" value="P:positive regulation of cell division"/>
    <property type="evidence" value="ECO:0007669"/>
    <property type="project" value="UniProtKB-KW"/>
</dbReference>
<dbReference type="GO" id="GO:0008284">
    <property type="term" value="P:positive regulation of cell population proliferation"/>
    <property type="evidence" value="ECO:0000250"/>
    <property type="project" value="UniProtKB"/>
</dbReference>
<dbReference type="GO" id="GO:0045725">
    <property type="term" value="P:positive regulation of glycogen biosynthetic process"/>
    <property type="evidence" value="ECO:0000315"/>
    <property type="project" value="BHF-UCL"/>
</dbReference>
<dbReference type="GO" id="GO:0046628">
    <property type="term" value="P:positive regulation of insulin receptor signaling pathway"/>
    <property type="evidence" value="ECO:0007669"/>
    <property type="project" value="Ensembl"/>
</dbReference>
<dbReference type="GO" id="GO:0043410">
    <property type="term" value="P:positive regulation of MAPK cascade"/>
    <property type="evidence" value="ECO:0007669"/>
    <property type="project" value="Ensembl"/>
</dbReference>
<dbReference type="GO" id="GO:0045840">
    <property type="term" value="P:positive regulation of mitotic nuclear division"/>
    <property type="evidence" value="ECO:0007669"/>
    <property type="project" value="Ensembl"/>
</dbReference>
<dbReference type="GO" id="GO:0040018">
    <property type="term" value="P:positive regulation of multicellular organism growth"/>
    <property type="evidence" value="ECO:0000315"/>
    <property type="project" value="MGI"/>
</dbReference>
<dbReference type="GO" id="GO:0046622">
    <property type="term" value="P:positive regulation of organ growth"/>
    <property type="evidence" value="ECO:0000315"/>
    <property type="project" value="UniProtKB"/>
</dbReference>
<dbReference type="GO" id="GO:0051897">
    <property type="term" value="P:positive regulation of phosphatidylinositol 3-kinase/protein kinase B signal transduction"/>
    <property type="evidence" value="ECO:0000315"/>
    <property type="project" value="BHF-UCL"/>
</dbReference>
<dbReference type="GO" id="GO:0048633">
    <property type="term" value="P:positive regulation of skeletal muscle tissue growth"/>
    <property type="evidence" value="ECO:0000315"/>
    <property type="project" value="UniProtKB"/>
</dbReference>
<dbReference type="GO" id="GO:0045944">
    <property type="term" value="P:positive regulation of transcription by RNA polymerase II"/>
    <property type="evidence" value="ECO:0000316"/>
    <property type="project" value="MGI"/>
</dbReference>
<dbReference type="GO" id="GO:0051147">
    <property type="term" value="P:regulation of muscle cell differentiation"/>
    <property type="evidence" value="ECO:0000315"/>
    <property type="project" value="UniProtKB"/>
</dbReference>
<dbReference type="GO" id="GO:0060720">
    <property type="term" value="P:spongiotrophoblast cell proliferation"/>
    <property type="evidence" value="ECO:0000315"/>
    <property type="project" value="CACAO"/>
</dbReference>
<dbReference type="GO" id="GO:0051146">
    <property type="term" value="P:striated muscle cell differentiation"/>
    <property type="evidence" value="ECO:0000316"/>
    <property type="project" value="MGI"/>
</dbReference>
<dbReference type="CDD" id="cd04368">
    <property type="entry name" value="IlGF"/>
    <property type="match status" value="1"/>
</dbReference>
<dbReference type="FunFam" id="1.10.100.10:FF:000002">
    <property type="entry name" value="Insulin-like growth factor II preproprotein"/>
    <property type="match status" value="1"/>
</dbReference>
<dbReference type="Gene3D" id="1.10.100.10">
    <property type="entry name" value="Insulin-like"/>
    <property type="match status" value="1"/>
</dbReference>
<dbReference type="InterPro" id="IPR022334">
    <property type="entry name" value="IGF2"/>
</dbReference>
<dbReference type="InterPro" id="IPR013576">
    <property type="entry name" value="IGF2_C"/>
</dbReference>
<dbReference type="InterPro" id="IPR016179">
    <property type="entry name" value="Insulin-like"/>
</dbReference>
<dbReference type="InterPro" id="IPR022350">
    <property type="entry name" value="Insulin-like_growth_factor"/>
</dbReference>
<dbReference type="InterPro" id="IPR036438">
    <property type="entry name" value="Insulin-like_sf"/>
</dbReference>
<dbReference type="InterPro" id="IPR022353">
    <property type="entry name" value="Insulin_CS"/>
</dbReference>
<dbReference type="InterPro" id="IPR022352">
    <property type="entry name" value="Insulin_family"/>
</dbReference>
<dbReference type="PANTHER" id="PTHR46886">
    <property type="entry name" value="INSULIN-LIKE GROWTH FACTOR II"/>
    <property type="match status" value="1"/>
</dbReference>
<dbReference type="PANTHER" id="PTHR46886:SF1">
    <property type="entry name" value="INSULIN-LIKE GROWTH FACTOR II"/>
    <property type="match status" value="1"/>
</dbReference>
<dbReference type="Pfam" id="PF08365">
    <property type="entry name" value="IGF2_C"/>
    <property type="match status" value="1"/>
</dbReference>
<dbReference type="Pfam" id="PF00049">
    <property type="entry name" value="Insulin"/>
    <property type="match status" value="2"/>
</dbReference>
<dbReference type="PRINTS" id="PR02002">
    <property type="entry name" value="INSLNLIKEGF"/>
</dbReference>
<dbReference type="PRINTS" id="PR02006">
    <property type="entry name" value="INSLNLIKEGF2"/>
</dbReference>
<dbReference type="PRINTS" id="PR00276">
    <property type="entry name" value="INSULINFAMLY"/>
</dbReference>
<dbReference type="SMART" id="SM00078">
    <property type="entry name" value="IlGF"/>
    <property type="match status" value="1"/>
</dbReference>
<dbReference type="SUPFAM" id="SSF56994">
    <property type="entry name" value="Insulin-like"/>
    <property type="match status" value="1"/>
</dbReference>
<dbReference type="PROSITE" id="PS00262">
    <property type="entry name" value="INSULIN"/>
    <property type="match status" value="1"/>
</dbReference>
<feature type="signal peptide">
    <location>
        <begin position="1"/>
        <end position="24"/>
    </location>
</feature>
<feature type="chain" id="PRO_0000015720" description="Insulin-like growth factor 2">
    <location>
        <begin position="25"/>
        <end position="91"/>
    </location>
</feature>
<feature type="propeptide" id="PRO_0000015721" description="E peptide">
    <location>
        <begin position="92"/>
        <end position="180"/>
    </location>
</feature>
<feature type="peptide" id="PRO_0000370377" description="Preptin">
    <location>
        <begin position="93"/>
        <end position="126"/>
    </location>
</feature>
<feature type="region of interest" description="B">
    <location>
        <begin position="25"/>
        <end position="52"/>
    </location>
</feature>
<feature type="region of interest" description="C">
    <location>
        <begin position="53"/>
        <end position="64"/>
    </location>
</feature>
<feature type="region of interest" description="A">
    <location>
        <begin position="65"/>
        <end position="85"/>
    </location>
</feature>
<feature type="region of interest" description="D">
    <location>
        <begin position="86"/>
        <end position="91"/>
    </location>
</feature>
<feature type="region of interest" description="Disordered" evidence="3">
    <location>
        <begin position="157"/>
        <end position="180"/>
    </location>
</feature>
<feature type="site" description="Important for interaction with integrin" evidence="2">
    <location>
        <position position="48"/>
    </location>
</feature>
<feature type="site" description="Important for interaction with integrin" evidence="2">
    <location>
        <position position="58"/>
    </location>
</feature>
<feature type="site" description="Important for interaction with integrin" evidence="2">
    <location>
        <position position="61"/>
    </location>
</feature>
<feature type="site" description="Important for interaction with integrin" evidence="2">
    <location>
        <position position="62"/>
    </location>
</feature>
<feature type="disulfide bond" evidence="1">
    <location>
        <begin position="33"/>
        <end position="71"/>
    </location>
</feature>
<feature type="disulfide bond" evidence="1">
    <location>
        <begin position="45"/>
        <end position="84"/>
    </location>
</feature>
<feature type="disulfide bond" evidence="1">
    <location>
        <begin position="70"/>
        <end position="75"/>
    </location>
</feature>
<feature type="splice variant" id="VSP_059113" description="In isoform 2.">
    <original>M</original>
    <variation>MGGSVAGFQVPM</variation>
    <location>
        <position position="1"/>
    </location>
</feature>
<gene>
    <name evidence="18" type="primary">Igf2</name>
    <name evidence="15" type="synonym">Igf-2</name>
</gene>
<protein>
    <recommendedName>
        <fullName evidence="18">Insulin-like growth factor 2</fullName>
    </recommendedName>
    <alternativeName>
        <fullName evidence="14">Insulin-like growth factor II</fullName>
        <shortName evidence="13">IGF-II</shortName>
    </alternativeName>
    <alternativeName>
        <fullName>Multiplication-stimulating polypeptide</fullName>
    </alternativeName>
    <component>
        <recommendedName>
            <fullName evidence="2">Preptin</fullName>
        </recommendedName>
    </component>
</protein>
<evidence type="ECO:0000250" key="1"/>
<evidence type="ECO:0000250" key="2">
    <source>
        <dbReference type="UniProtKB" id="P01344"/>
    </source>
</evidence>
<evidence type="ECO:0000256" key="3">
    <source>
        <dbReference type="SAM" id="MobiDB-lite"/>
    </source>
</evidence>
<evidence type="ECO:0000269" key="4">
    <source>
    </source>
</evidence>
<evidence type="ECO:0000269" key="5">
    <source>
    </source>
</evidence>
<evidence type="ECO:0000269" key="6">
    <source>
    </source>
</evidence>
<evidence type="ECO:0000269" key="7">
    <source>
    </source>
</evidence>
<evidence type="ECO:0000269" key="8">
    <source>
    </source>
</evidence>
<evidence type="ECO:0000269" key="9">
    <source>
    </source>
</evidence>
<evidence type="ECO:0000269" key="10">
    <source>
    </source>
</evidence>
<evidence type="ECO:0000269" key="11">
    <source>
    </source>
</evidence>
<evidence type="ECO:0000269" key="12">
    <source>
    </source>
</evidence>
<evidence type="ECO:0000303" key="13">
    <source>
    </source>
</evidence>
<evidence type="ECO:0000303" key="14">
    <source>
    </source>
</evidence>
<evidence type="ECO:0000305" key="15"/>
<evidence type="ECO:0000305" key="16">
    <source>
    </source>
</evidence>
<evidence type="ECO:0000305" key="17">
    <source>
    </source>
</evidence>
<evidence type="ECO:0000312" key="18">
    <source>
        <dbReference type="MGI" id="MGI:96434"/>
    </source>
</evidence>